<keyword id="KW-0024">Alternative initiation</keyword>
<organism>
    <name type="scientific">Vesicular stomatitis Indiana virus (strain 98COE North America)</name>
    <name type="common">VSIV</name>
    <dbReference type="NCBI Taxonomy" id="434488"/>
    <lineage>
        <taxon>Viruses</taxon>
        <taxon>Riboviria</taxon>
        <taxon>Orthornavirae</taxon>
        <taxon>Negarnaviricota</taxon>
        <taxon>Haploviricotina</taxon>
        <taxon>Monjiviricetes</taxon>
        <taxon>Mononegavirales</taxon>
        <taxon>Rhabdoviridae</taxon>
        <taxon>Alpharhabdovirinae</taxon>
        <taxon>Vesiculovirus</taxon>
        <taxon>Vesiculovirus indiana</taxon>
    </lineage>
</organism>
<dbReference type="EMBL" id="AF473864">
    <property type="status" value="NOT_ANNOTATED_CDS"/>
    <property type="molecule type" value="Genomic_RNA"/>
</dbReference>
<dbReference type="SMR" id="P0C2X1"/>
<dbReference type="Proteomes" id="UP000007624">
    <property type="component" value="Segment"/>
</dbReference>
<sequence length="67" mass="7957">MRSKHNEMKSPIMSCSKRTEWKSILSPLIFRQQMILTQNLNQKLKTIKACMYQIRKLSKLKALYKGL</sequence>
<name>C_VSIVN</name>
<evidence type="ECO:0000250" key="1">
    <source>
        <dbReference type="UniProtKB" id="P0C2X2"/>
    </source>
</evidence>
<evidence type="ECO:0000305" key="2"/>
<protein>
    <recommendedName>
        <fullName>Protein C'</fullName>
    </recommendedName>
</protein>
<comment type="function">
    <text evidence="1">Seems to stimulates transcription by the viral polymerase. May play a role in viral pathogenesis or transmission by insects vectors.</text>
</comment>
<comment type="alternative products">
    <event type="alternative initiation"/>
    <isoform>
        <id>P0C2X1-1</id>
        <name>C'</name>
        <sequence type="displayed"/>
    </isoform>
    <isoform>
        <id>P0C2X1-2</id>
        <name>C</name>
        <sequence type="described" ref="VSP_025746"/>
    </isoform>
</comment>
<comment type="miscellaneous">
    <text>The P gene has two overlapping open reading frames. One encodes the P protein and the other the C'/C proteins.</text>
</comment>
<comment type="similarity">
    <text evidence="2">Belongs to the rhabdoviruses C protein family.</text>
</comment>
<proteinExistence type="inferred from homology"/>
<organismHost>
    <name type="scientific">Aedes</name>
    <dbReference type="NCBI Taxonomy" id="7158"/>
</organismHost>
<organismHost>
    <name type="scientific">Bos taurus</name>
    <name type="common">Bovine</name>
    <dbReference type="NCBI Taxonomy" id="9913"/>
</organismHost>
<organismHost>
    <name type="scientific">Culicoides</name>
    <dbReference type="NCBI Taxonomy" id="58271"/>
</organismHost>
<organismHost>
    <name type="scientific">Equus asinus</name>
    <name type="common">Donkey</name>
    <name type="synonym">Equus africanus asinus</name>
    <dbReference type="NCBI Taxonomy" id="9793"/>
</organismHost>
<organismHost>
    <name type="scientific">Equus caballus</name>
    <name type="common">Horse</name>
    <dbReference type="NCBI Taxonomy" id="9796"/>
</organismHost>
<organismHost>
    <name type="scientific">Homo sapiens</name>
    <name type="common">Human</name>
    <dbReference type="NCBI Taxonomy" id="9606"/>
</organismHost>
<organismHost>
    <name type="scientific">Lutzomyia</name>
    <dbReference type="NCBI Taxonomy" id="252607"/>
</organismHost>
<organismHost>
    <name type="scientific">Musca domestica</name>
    <name type="common">House fly</name>
    <dbReference type="NCBI Taxonomy" id="7370"/>
</organismHost>
<organismHost>
    <name type="scientific">Simuliidae</name>
    <name type="common">black flies</name>
    <dbReference type="NCBI Taxonomy" id="7190"/>
</organismHost>
<organismHost>
    <name type="scientific">Sus scrofa</name>
    <name type="common">Pig</name>
    <dbReference type="NCBI Taxonomy" id="9823"/>
</organismHost>
<accession>P0C2X1</accession>
<reference key="1">
    <citation type="journal article" date="2002" name="J. Gen. Virol.">
        <title>Full-length genome analysis of natural isolates of vesicular stomatitis virus (Indiana 1 serotype) from North, Central and South America.</title>
        <authorList>
            <person name="Rodriguez L.L."/>
            <person name="Pauszek S.J."/>
            <person name="Bunch T.A."/>
            <person name="Schumann K.R."/>
        </authorList>
    </citation>
    <scope>NUCLEOTIDE SEQUENCE [GENOMIC RNA]</scope>
</reference>
<gene>
    <name type="primary">P</name>
</gene>
<feature type="chain" id="PRO_0000288653" description="Protein C'">
    <location>
        <begin position="1"/>
        <end position="67"/>
    </location>
</feature>
<feature type="splice variant" id="VSP_025746" description="In isoform C." evidence="2">
    <location>
        <begin position="1"/>
        <end position="12"/>
    </location>
</feature>